<dbReference type="EC" id="6.1.1.20" evidence="1"/>
<dbReference type="EMBL" id="AE009949">
    <property type="protein sequence ID" value="AAL97487.1"/>
    <property type="status" value="ALT_INIT"/>
    <property type="molecule type" value="Genomic_DNA"/>
</dbReference>
<dbReference type="RefSeq" id="WP_011017614.1">
    <property type="nucleotide sequence ID" value="NC_003485.1"/>
</dbReference>
<dbReference type="SMR" id="Q8P1K1"/>
<dbReference type="BindingDB" id="Q8P1K1"/>
<dbReference type="ChEMBL" id="CHEMBL4690"/>
<dbReference type="KEGG" id="spm:spyM18_0827"/>
<dbReference type="HOGENOM" id="CLU_025086_0_1_9"/>
<dbReference type="GO" id="GO:0005737">
    <property type="term" value="C:cytoplasm"/>
    <property type="evidence" value="ECO:0007669"/>
    <property type="project" value="UniProtKB-SubCell"/>
</dbReference>
<dbReference type="GO" id="GO:0005524">
    <property type="term" value="F:ATP binding"/>
    <property type="evidence" value="ECO:0007669"/>
    <property type="project" value="UniProtKB-UniRule"/>
</dbReference>
<dbReference type="GO" id="GO:0140096">
    <property type="term" value="F:catalytic activity, acting on a protein"/>
    <property type="evidence" value="ECO:0007669"/>
    <property type="project" value="UniProtKB-ARBA"/>
</dbReference>
<dbReference type="GO" id="GO:0000287">
    <property type="term" value="F:magnesium ion binding"/>
    <property type="evidence" value="ECO:0007669"/>
    <property type="project" value="UniProtKB-UniRule"/>
</dbReference>
<dbReference type="GO" id="GO:0004826">
    <property type="term" value="F:phenylalanine-tRNA ligase activity"/>
    <property type="evidence" value="ECO:0007669"/>
    <property type="project" value="UniProtKB-UniRule"/>
</dbReference>
<dbReference type="GO" id="GO:0016740">
    <property type="term" value="F:transferase activity"/>
    <property type="evidence" value="ECO:0007669"/>
    <property type="project" value="UniProtKB-ARBA"/>
</dbReference>
<dbReference type="GO" id="GO:0000049">
    <property type="term" value="F:tRNA binding"/>
    <property type="evidence" value="ECO:0007669"/>
    <property type="project" value="InterPro"/>
</dbReference>
<dbReference type="GO" id="GO:0006432">
    <property type="term" value="P:phenylalanyl-tRNA aminoacylation"/>
    <property type="evidence" value="ECO:0007669"/>
    <property type="project" value="UniProtKB-UniRule"/>
</dbReference>
<dbReference type="CDD" id="cd00496">
    <property type="entry name" value="PheRS_alpha_core"/>
    <property type="match status" value="1"/>
</dbReference>
<dbReference type="FunFam" id="3.30.930.10:FF:000003">
    <property type="entry name" value="Phenylalanine--tRNA ligase alpha subunit"/>
    <property type="match status" value="1"/>
</dbReference>
<dbReference type="Gene3D" id="3.30.930.10">
    <property type="entry name" value="Bira Bifunctional Protein, Domain 2"/>
    <property type="match status" value="1"/>
</dbReference>
<dbReference type="HAMAP" id="MF_00281">
    <property type="entry name" value="Phe_tRNA_synth_alpha1"/>
    <property type="match status" value="1"/>
</dbReference>
<dbReference type="InterPro" id="IPR006195">
    <property type="entry name" value="aa-tRNA-synth_II"/>
</dbReference>
<dbReference type="InterPro" id="IPR045864">
    <property type="entry name" value="aa-tRNA-synth_II/BPL/LPL"/>
</dbReference>
<dbReference type="InterPro" id="IPR004529">
    <property type="entry name" value="Phe-tRNA-synth_IIc_asu"/>
</dbReference>
<dbReference type="InterPro" id="IPR004188">
    <property type="entry name" value="Phe-tRNA_ligase_II_N"/>
</dbReference>
<dbReference type="InterPro" id="IPR022911">
    <property type="entry name" value="Phe_tRNA_ligase_alpha1_bac"/>
</dbReference>
<dbReference type="InterPro" id="IPR002319">
    <property type="entry name" value="Phenylalanyl-tRNA_Synthase"/>
</dbReference>
<dbReference type="InterPro" id="IPR010978">
    <property type="entry name" value="tRNA-bd_arm"/>
</dbReference>
<dbReference type="NCBIfam" id="TIGR00468">
    <property type="entry name" value="pheS"/>
    <property type="match status" value="1"/>
</dbReference>
<dbReference type="PANTHER" id="PTHR11538:SF41">
    <property type="entry name" value="PHENYLALANINE--TRNA LIGASE, MITOCHONDRIAL"/>
    <property type="match status" value="1"/>
</dbReference>
<dbReference type="PANTHER" id="PTHR11538">
    <property type="entry name" value="PHENYLALANYL-TRNA SYNTHETASE"/>
    <property type="match status" value="1"/>
</dbReference>
<dbReference type="Pfam" id="PF02912">
    <property type="entry name" value="Phe_tRNA-synt_N"/>
    <property type="match status" value="1"/>
</dbReference>
<dbReference type="Pfam" id="PF01409">
    <property type="entry name" value="tRNA-synt_2d"/>
    <property type="match status" value="1"/>
</dbReference>
<dbReference type="SUPFAM" id="SSF55681">
    <property type="entry name" value="Class II aaRS and biotin synthetases"/>
    <property type="match status" value="1"/>
</dbReference>
<dbReference type="SUPFAM" id="SSF46589">
    <property type="entry name" value="tRNA-binding arm"/>
    <property type="match status" value="1"/>
</dbReference>
<dbReference type="PROSITE" id="PS50862">
    <property type="entry name" value="AA_TRNA_LIGASE_II"/>
    <property type="match status" value="1"/>
</dbReference>
<sequence length="347" mass="39292">MDLQAQLEELKTKTLETLQSLTGNHTKELQDLRVAVLGKKGSLTELLKGLKDLSNDLRPVVGKQVNEVRDLLTKAFEEQAKIVEAAKIQAQLDAESIDVTLPGRQMTLGHRHVLTQTSEEIEDIFLGMGFQIVDGFEVEKDYYNFERMNLPKDHPARDMQDTFYITEEILLRTHTSPVQARTLDQHDFSKGPLKMVSPGRVFRRDTDDATHSHQFHQIEGLVVGKNISMRDLKGTLEMIIKKMFGEERSIRLRPSYFPFTEPSVEVDVSCFKCGGKGCNVCKKTGWIEILGAGMVHPSVLEMSGVDAKEYSGFAFGLGQERIAMLRYGINDIRGFYQGDQRFSEQFN</sequence>
<name>SYFA_STRP8</name>
<proteinExistence type="inferred from homology"/>
<gene>
    <name evidence="1" type="primary">pheS</name>
    <name type="ordered locus">spyM18_0827</name>
</gene>
<organism>
    <name type="scientific">Streptococcus pyogenes serotype M18 (strain MGAS8232)</name>
    <dbReference type="NCBI Taxonomy" id="186103"/>
    <lineage>
        <taxon>Bacteria</taxon>
        <taxon>Bacillati</taxon>
        <taxon>Bacillota</taxon>
        <taxon>Bacilli</taxon>
        <taxon>Lactobacillales</taxon>
        <taxon>Streptococcaceae</taxon>
        <taxon>Streptococcus</taxon>
    </lineage>
</organism>
<keyword id="KW-0030">Aminoacyl-tRNA synthetase</keyword>
<keyword id="KW-0067">ATP-binding</keyword>
<keyword id="KW-0963">Cytoplasm</keyword>
<keyword id="KW-0436">Ligase</keyword>
<keyword id="KW-0460">Magnesium</keyword>
<keyword id="KW-0479">Metal-binding</keyword>
<keyword id="KW-0547">Nucleotide-binding</keyword>
<keyword id="KW-0648">Protein biosynthesis</keyword>
<comment type="catalytic activity">
    <reaction evidence="1">
        <text>tRNA(Phe) + L-phenylalanine + ATP = L-phenylalanyl-tRNA(Phe) + AMP + diphosphate + H(+)</text>
        <dbReference type="Rhea" id="RHEA:19413"/>
        <dbReference type="Rhea" id="RHEA-COMP:9668"/>
        <dbReference type="Rhea" id="RHEA-COMP:9699"/>
        <dbReference type="ChEBI" id="CHEBI:15378"/>
        <dbReference type="ChEBI" id="CHEBI:30616"/>
        <dbReference type="ChEBI" id="CHEBI:33019"/>
        <dbReference type="ChEBI" id="CHEBI:58095"/>
        <dbReference type="ChEBI" id="CHEBI:78442"/>
        <dbReference type="ChEBI" id="CHEBI:78531"/>
        <dbReference type="ChEBI" id="CHEBI:456215"/>
        <dbReference type="EC" id="6.1.1.20"/>
    </reaction>
</comment>
<comment type="cofactor">
    <cofactor evidence="1">
        <name>Mg(2+)</name>
        <dbReference type="ChEBI" id="CHEBI:18420"/>
    </cofactor>
    <text evidence="1">Binds 2 magnesium ions per tetramer.</text>
</comment>
<comment type="subunit">
    <text evidence="1">Tetramer of two alpha and two beta subunits.</text>
</comment>
<comment type="subcellular location">
    <subcellularLocation>
        <location evidence="1">Cytoplasm</location>
    </subcellularLocation>
</comment>
<comment type="similarity">
    <text evidence="1">Belongs to the class-II aminoacyl-tRNA synthetase family. Phe-tRNA synthetase alpha subunit type 1 subfamily.</text>
</comment>
<comment type="sequence caution" evidence="2">
    <conflict type="erroneous initiation">
        <sequence resource="EMBL-CDS" id="AAL97487"/>
    </conflict>
</comment>
<reference key="1">
    <citation type="journal article" date="2002" name="Proc. Natl. Acad. Sci. U.S.A.">
        <title>Genome sequence and comparative microarray analysis of serotype M18 group A Streptococcus strains associated with acute rheumatic fever outbreaks.</title>
        <authorList>
            <person name="Smoot J.C."/>
            <person name="Barbian K.D."/>
            <person name="Van Gompel J.J."/>
            <person name="Smoot L.M."/>
            <person name="Chaussee M.S."/>
            <person name="Sylva G.L."/>
            <person name="Sturdevant D.E."/>
            <person name="Ricklefs S.M."/>
            <person name="Porcella S.F."/>
            <person name="Parkins L.D."/>
            <person name="Beres S.B."/>
            <person name="Campbell D.S."/>
            <person name="Smith T.M."/>
            <person name="Zhang Q."/>
            <person name="Kapur V."/>
            <person name="Daly J.A."/>
            <person name="Veasy L.G."/>
            <person name="Musser J.M."/>
        </authorList>
    </citation>
    <scope>NUCLEOTIDE SEQUENCE [LARGE SCALE GENOMIC DNA]</scope>
    <source>
        <strain>MGAS8232</strain>
    </source>
</reference>
<protein>
    <recommendedName>
        <fullName evidence="1">Phenylalanine--tRNA ligase alpha subunit</fullName>
        <ecNumber evidence="1">6.1.1.20</ecNumber>
    </recommendedName>
    <alternativeName>
        <fullName evidence="1">Phenylalanyl-tRNA synthetase alpha subunit</fullName>
        <shortName evidence="1">PheRS</shortName>
    </alternativeName>
</protein>
<accession>Q8P1K1</accession>
<feature type="chain" id="PRO_0000126778" description="Phenylalanine--tRNA ligase alpha subunit">
    <location>
        <begin position="1"/>
        <end position="347"/>
    </location>
</feature>
<feature type="binding site" evidence="1">
    <location>
        <position position="261"/>
    </location>
    <ligand>
        <name>Mg(2+)</name>
        <dbReference type="ChEBI" id="CHEBI:18420"/>
        <note>shared with beta subunit</note>
    </ligand>
</feature>
<evidence type="ECO:0000255" key="1">
    <source>
        <dbReference type="HAMAP-Rule" id="MF_00281"/>
    </source>
</evidence>
<evidence type="ECO:0000305" key="2"/>